<dbReference type="EC" id="3.1.-.-" evidence="1"/>
<dbReference type="EMBL" id="AL123456">
    <property type="protein sequence ID" value="CCP45617.1"/>
    <property type="molecule type" value="Genomic_DNA"/>
</dbReference>
<dbReference type="PIR" id="D70691">
    <property type="entry name" value="D70691"/>
</dbReference>
<dbReference type="RefSeq" id="NP_217333.1">
    <property type="nucleotide sequence ID" value="NC_000962.3"/>
</dbReference>
<dbReference type="RefSeq" id="WP_003414279.1">
    <property type="nucleotide sequence ID" value="NZ_NVQJ01000006.1"/>
</dbReference>
<dbReference type="SMR" id="P9WPJ5"/>
<dbReference type="STRING" id="83332.Rv2817c"/>
<dbReference type="PaxDb" id="83332-Rv2817c"/>
<dbReference type="DNASU" id="888506"/>
<dbReference type="GeneID" id="45426805"/>
<dbReference type="GeneID" id="888506"/>
<dbReference type="KEGG" id="mtu:Rv2817c"/>
<dbReference type="KEGG" id="mtv:RVBD_2817c"/>
<dbReference type="TubercuList" id="Rv2817c"/>
<dbReference type="eggNOG" id="COG1518">
    <property type="taxonomic scope" value="Bacteria"/>
</dbReference>
<dbReference type="InParanoid" id="P9WPJ5"/>
<dbReference type="OrthoDB" id="1550386at2"/>
<dbReference type="PhylomeDB" id="P9WPJ5"/>
<dbReference type="Proteomes" id="UP000001584">
    <property type="component" value="Chromosome"/>
</dbReference>
<dbReference type="GO" id="GO:0009274">
    <property type="term" value="C:peptidoglycan-based cell wall"/>
    <property type="evidence" value="ECO:0007005"/>
    <property type="project" value="MTBBASE"/>
</dbReference>
<dbReference type="GO" id="GO:0003677">
    <property type="term" value="F:DNA binding"/>
    <property type="evidence" value="ECO:0007669"/>
    <property type="project" value="UniProtKB-KW"/>
</dbReference>
<dbReference type="GO" id="GO:0004519">
    <property type="term" value="F:endonuclease activity"/>
    <property type="evidence" value="ECO:0000318"/>
    <property type="project" value="GO_Central"/>
</dbReference>
<dbReference type="GO" id="GO:0046872">
    <property type="term" value="F:metal ion binding"/>
    <property type="evidence" value="ECO:0007669"/>
    <property type="project" value="UniProtKB-UniRule"/>
</dbReference>
<dbReference type="GO" id="GO:0099048">
    <property type="term" value="P:CRISPR-cas system"/>
    <property type="evidence" value="ECO:0000318"/>
    <property type="project" value="GO_Central"/>
</dbReference>
<dbReference type="GO" id="GO:0051607">
    <property type="term" value="P:defense response to virus"/>
    <property type="evidence" value="ECO:0007669"/>
    <property type="project" value="UniProtKB-UniRule"/>
</dbReference>
<dbReference type="GO" id="GO:0043571">
    <property type="term" value="P:maintenance of CRISPR repeat elements"/>
    <property type="evidence" value="ECO:0000318"/>
    <property type="project" value="GO_Central"/>
</dbReference>
<dbReference type="CDD" id="cd09636">
    <property type="entry name" value="Cas1_I-II-III"/>
    <property type="match status" value="1"/>
</dbReference>
<dbReference type="Gene3D" id="1.20.120.920">
    <property type="entry name" value="CRISPR-associated endonuclease Cas1, C-terminal domain"/>
    <property type="match status" value="1"/>
</dbReference>
<dbReference type="Gene3D" id="3.100.10.20">
    <property type="entry name" value="CRISPR-associated endonuclease Cas1, N-terminal domain"/>
    <property type="match status" value="1"/>
</dbReference>
<dbReference type="HAMAP" id="MF_01470">
    <property type="entry name" value="Cas1"/>
    <property type="match status" value="1"/>
</dbReference>
<dbReference type="InterPro" id="IPR050646">
    <property type="entry name" value="Cas1"/>
</dbReference>
<dbReference type="InterPro" id="IPR002729">
    <property type="entry name" value="CRISPR-assoc_Cas1"/>
</dbReference>
<dbReference type="InterPro" id="IPR042206">
    <property type="entry name" value="CRISPR-assoc_Cas1_C"/>
</dbReference>
<dbReference type="InterPro" id="IPR042211">
    <property type="entry name" value="CRISPR-assoc_Cas1_N"/>
</dbReference>
<dbReference type="NCBIfam" id="TIGR00287">
    <property type="entry name" value="cas1"/>
    <property type="match status" value="1"/>
</dbReference>
<dbReference type="PANTHER" id="PTHR34353">
    <property type="entry name" value="CRISPR-ASSOCIATED ENDONUCLEASE CAS1 1"/>
    <property type="match status" value="1"/>
</dbReference>
<dbReference type="PANTHER" id="PTHR34353:SF2">
    <property type="entry name" value="CRISPR-ASSOCIATED ENDONUCLEASE CAS1 1"/>
    <property type="match status" value="1"/>
</dbReference>
<dbReference type="Pfam" id="PF01867">
    <property type="entry name" value="Cas_Cas1"/>
    <property type="match status" value="1"/>
</dbReference>
<reference key="1">
    <citation type="journal article" date="1998" name="Nature">
        <title>Deciphering the biology of Mycobacterium tuberculosis from the complete genome sequence.</title>
        <authorList>
            <person name="Cole S.T."/>
            <person name="Brosch R."/>
            <person name="Parkhill J."/>
            <person name="Garnier T."/>
            <person name="Churcher C.M."/>
            <person name="Harris D.E."/>
            <person name="Gordon S.V."/>
            <person name="Eiglmeier K."/>
            <person name="Gas S."/>
            <person name="Barry C.E. III"/>
            <person name="Tekaia F."/>
            <person name="Badcock K."/>
            <person name="Basham D."/>
            <person name="Brown D."/>
            <person name="Chillingworth T."/>
            <person name="Connor R."/>
            <person name="Davies R.M."/>
            <person name="Devlin K."/>
            <person name="Feltwell T."/>
            <person name="Gentles S."/>
            <person name="Hamlin N."/>
            <person name="Holroyd S."/>
            <person name="Hornsby T."/>
            <person name="Jagels K."/>
            <person name="Krogh A."/>
            <person name="McLean J."/>
            <person name="Moule S."/>
            <person name="Murphy L.D."/>
            <person name="Oliver S."/>
            <person name="Osborne J."/>
            <person name="Quail M.A."/>
            <person name="Rajandream M.A."/>
            <person name="Rogers J."/>
            <person name="Rutter S."/>
            <person name="Seeger K."/>
            <person name="Skelton S."/>
            <person name="Squares S."/>
            <person name="Squares R."/>
            <person name="Sulston J.E."/>
            <person name="Taylor K."/>
            <person name="Whitehead S."/>
            <person name="Barrell B.G."/>
        </authorList>
    </citation>
    <scope>NUCLEOTIDE SEQUENCE [LARGE SCALE GENOMIC DNA]</scope>
    <source>
        <strain>ATCC 25618 / H37Rv</strain>
    </source>
</reference>
<reference key="2">
    <citation type="journal article" date="2011" name="Mol. Cell. Proteomics">
        <title>Proteogenomic analysis of Mycobacterium tuberculosis by high resolution mass spectrometry.</title>
        <authorList>
            <person name="Kelkar D.S."/>
            <person name="Kumar D."/>
            <person name="Kumar P."/>
            <person name="Balakrishnan L."/>
            <person name="Muthusamy B."/>
            <person name="Yadav A.K."/>
            <person name="Shrivastava P."/>
            <person name="Marimuthu A."/>
            <person name="Anand S."/>
            <person name="Sundaram H."/>
            <person name="Kingsbury R."/>
            <person name="Harsha H.C."/>
            <person name="Nair B."/>
            <person name="Prasad T.S."/>
            <person name="Chauhan D.S."/>
            <person name="Katoch K."/>
            <person name="Katoch V.M."/>
            <person name="Kumar P."/>
            <person name="Chaerkady R."/>
            <person name="Ramachandran S."/>
            <person name="Dash D."/>
            <person name="Pandey A."/>
        </authorList>
    </citation>
    <scope>IDENTIFICATION BY MASS SPECTROMETRY [LARGE SCALE ANALYSIS]</scope>
    <source>
        <strain>ATCC 25618 / H37Rv</strain>
    </source>
</reference>
<reference key="3">
    <citation type="journal article" date="2019" name="FASEB J.">
        <title>Mycobacterium tuberculosis type III-A CRISPR/Cas system crRNA and its maturation have atypical features.</title>
        <authorList>
            <person name="Wei W."/>
            <person name="Zhang S."/>
            <person name="Fleming J."/>
            <person name="Chen Y."/>
            <person name="Li Z."/>
            <person name="Fan S."/>
            <person name="Liu Y."/>
            <person name="Wang W."/>
            <person name="Wang T."/>
            <person name="Liu Y."/>
            <person name="Ren B."/>
            <person name="Wang M."/>
            <person name="Jiao J."/>
            <person name="Chen Y."/>
            <person name="Zhou Y."/>
            <person name="Zhou Y."/>
            <person name="Gu S."/>
            <person name="Zhang X."/>
            <person name="Wan L."/>
            <person name="Chen T."/>
            <person name="Zhou L."/>
            <person name="Chen Y."/>
            <person name="Zhang X.E."/>
            <person name="Li C."/>
            <person name="Zhang H."/>
            <person name="Bi L."/>
        </authorList>
    </citation>
    <scope>FUNCTION IN PLASMID RESISTANCE</scope>
    <scope>DISRUPTION PHENOTYPE</scope>
    <source>
        <strain>H37Rv</strain>
    </source>
</reference>
<name>CAS1_MYCTU</name>
<keyword id="KW-0051">Antiviral defense</keyword>
<keyword id="KW-0238">DNA-binding</keyword>
<keyword id="KW-0255">Endonuclease</keyword>
<keyword id="KW-0378">Hydrolase</keyword>
<keyword id="KW-0460">Magnesium</keyword>
<keyword id="KW-0464">Manganese</keyword>
<keyword id="KW-0479">Metal-binding</keyword>
<keyword id="KW-0540">Nuclease</keyword>
<keyword id="KW-1185">Reference proteome</keyword>
<proteinExistence type="evidence at protein level"/>
<accession>P9WPJ5</accession>
<accession>F2GLB7</accession>
<accession>L0TDM9</accession>
<accession>P71636</accession>
<accession>Q7D6I7</accession>
<organism>
    <name type="scientific">Mycobacterium tuberculosis (strain ATCC 25618 / H37Rv)</name>
    <dbReference type="NCBI Taxonomy" id="83332"/>
    <lineage>
        <taxon>Bacteria</taxon>
        <taxon>Bacillati</taxon>
        <taxon>Actinomycetota</taxon>
        <taxon>Actinomycetes</taxon>
        <taxon>Mycobacteriales</taxon>
        <taxon>Mycobacteriaceae</taxon>
        <taxon>Mycobacterium</taxon>
        <taxon>Mycobacterium tuberculosis complex</taxon>
    </lineage>
</organism>
<feature type="chain" id="PRO_0000418217" description="CRISPR-associated endonuclease Cas1">
    <location>
        <begin position="1"/>
        <end position="338"/>
    </location>
</feature>
<feature type="binding site" evidence="1">
    <location>
        <position position="155"/>
    </location>
    <ligand>
        <name>Mn(2+)</name>
        <dbReference type="ChEBI" id="CHEBI:29035"/>
    </ligand>
</feature>
<feature type="binding site" evidence="1">
    <location>
        <position position="220"/>
    </location>
    <ligand>
        <name>Mn(2+)</name>
        <dbReference type="ChEBI" id="CHEBI:29035"/>
    </ligand>
</feature>
<feature type="binding site" evidence="1">
    <location>
        <position position="235"/>
    </location>
    <ligand>
        <name>Mn(2+)</name>
        <dbReference type="ChEBI" id="CHEBI:29035"/>
    </ligand>
</feature>
<protein>
    <recommendedName>
        <fullName evidence="1">CRISPR-associated endonuclease Cas1</fullName>
        <ecNumber evidence="1">3.1.-.-</ecNumber>
    </recommendedName>
</protein>
<sequence length="338" mass="37664">MVQLYVSDSVSRISFADGRVIVWSEELGESQYPIETLDGITLFGRPTMTTPFIVEMLKRERDIQLFTTDGHYQGRISTPDVSYAPRLRQQVHRTDDPAFCLSLSKRIVSRKILNQQALIRAHTSGQDVAESIRTMKHSLAWVDRSGSLAELNGFEGNAAKAYFTALGHLVPQEFAFQGRSTRPPLDAFNSMVSLGYSLLYKNIIGAIERHSLNAYIGFLHQDSRGHATLASDLMEVWRAPIIDDTVLRLIADGVVDTRAFSKNSDTGAVFATREATRSIARAFGNRIARTATYIKGDPHRYTFQYALDLQLQSLVRVIEAGHPSRLVDIDITSEPSGA</sequence>
<gene>
    <name evidence="1" type="primary">cas1</name>
    <name type="ordered locus">Rv2817c</name>
</gene>
<evidence type="ECO:0000255" key="1">
    <source>
        <dbReference type="HAMAP-Rule" id="MF_01470"/>
    </source>
</evidence>
<evidence type="ECO:0000269" key="2">
    <source>
    </source>
</evidence>
<evidence type="ECO:0000305" key="3">
    <source>
    </source>
</evidence>
<comment type="function">
    <text evidence="2 3">CRISPR (clustered regularly interspaced short palindromic repeat) is an adaptive immune system that provides protection against mobile genetic elements (viruses, transposable elements and conjugative plasmids). CRISPR clusters contain spacers, sequences complementary to antecedent mobile elements, and target invading nucleic acids. CRISPR clusters are transcribed and processed into CRISPR RNA (crRNA). The type III-A Csm effector complex binds crRNA and acts as a crRNA-guided RNase, DNase and cyclic oligoadenylate synthase; binding of target RNA cognate to the crRNA is required for all activities (Probable). This CRISPR-Cas system protects bacteria against transformation with plasmids containing DNA homologous to its spacer regions (PubMed:29979631).</text>
</comment>
<comment type="cofactor">
    <cofactor evidence="1">
        <name>Mg(2+)</name>
        <dbReference type="ChEBI" id="CHEBI:18420"/>
    </cofactor>
    <cofactor evidence="1">
        <name>Mn(2+)</name>
        <dbReference type="ChEBI" id="CHEBI:29035"/>
    </cofactor>
</comment>
<comment type="subunit">
    <text evidence="1">Homodimer, forms a heterotetramer with a Cas2 homodimer.</text>
</comment>
<comment type="disruption phenotype">
    <text evidence="2">Deletion of the entire CRISPR-Cas locus (cas6 to cas2, Rv2824c to Rv2816c) decreases resistance to plasmids encoding spacer elements about 6-fold.</text>
</comment>
<comment type="miscellaneous">
    <text evidence="3">Encoded in a type III-A CRISPR locus.</text>
</comment>
<comment type="similarity">
    <text evidence="1">Belongs to the CRISPR-associated endonuclease Cas1 family.</text>
</comment>